<name>BAF_DROME</name>
<gene>
    <name type="primary">baf</name>
    <name type="ORF">CG7380</name>
</gene>
<dbReference type="EMBL" id="AE014134">
    <property type="protein sequence ID" value="AAF52592.1"/>
    <property type="molecule type" value="Genomic_DNA"/>
</dbReference>
<dbReference type="EMBL" id="BT011552">
    <property type="protein sequence ID" value="AAS15688.1"/>
    <property type="molecule type" value="mRNA"/>
</dbReference>
<dbReference type="RefSeq" id="NP_001260220.1">
    <property type="nucleotide sequence ID" value="NM_001273291.1"/>
</dbReference>
<dbReference type="RefSeq" id="NP_609176.1">
    <property type="nucleotide sequence ID" value="NM_135332.4"/>
</dbReference>
<dbReference type="SMR" id="Q9VLU0"/>
<dbReference type="BioGRID" id="60229">
    <property type="interactions" value="14"/>
</dbReference>
<dbReference type="DIP" id="DIP-23961N"/>
<dbReference type="FunCoup" id="Q9VLU0">
    <property type="interactions" value="1764"/>
</dbReference>
<dbReference type="IntAct" id="Q9VLU0">
    <property type="interactions" value="5"/>
</dbReference>
<dbReference type="STRING" id="7227.FBpp0305308"/>
<dbReference type="iPTMnet" id="Q9VLU0"/>
<dbReference type="PaxDb" id="7227-FBpp0305308"/>
<dbReference type="EnsemblMetazoa" id="FBtr0079535">
    <property type="protein sequence ID" value="FBpp0079157"/>
    <property type="gene ID" value="FBgn0031977"/>
</dbReference>
<dbReference type="EnsemblMetazoa" id="FBtr0333095">
    <property type="protein sequence ID" value="FBpp0305308"/>
    <property type="gene ID" value="FBgn0031977"/>
</dbReference>
<dbReference type="GeneID" id="34095"/>
<dbReference type="KEGG" id="dme:Dmel_CG7380"/>
<dbReference type="AGR" id="FB:FBgn0031977"/>
<dbReference type="CTD" id="12016"/>
<dbReference type="FlyBase" id="FBgn0031977">
    <property type="gene designation" value="baf"/>
</dbReference>
<dbReference type="VEuPathDB" id="VectorBase:FBgn0031977"/>
<dbReference type="eggNOG" id="KOG4233">
    <property type="taxonomic scope" value="Eukaryota"/>
</dbReference>
<dbReference type="GeneTree" id="ENSGT00940000167655"/>
<dbReference type="HOGENOM" id="CLU_167806_0_0_1"/>
<dbReference type="InParanoid" id="Q9VLU0"/>
<dbReference type="OMA" id="SKQQGDC"/>
<dbReference type="OrthoDB" id="9997163at2759"/>
<dbReference type="PhylomeDB" id="Q9VLU0"/>
<dbReference type="Reactome" id="R-DME-2995383">
    <property type="pathway name" value="Initiation of Nuclear Envelope (NE) Reformation"/>
</dbReference>
<dbReference type="SignaLink" id="Q9VLU0"/>
<dbReference type="BioGRID-ORCS" id="34095">
    <property type="hits" value="1 hit in 3 CRISPR screens"/>
</dbReference>
<dbReference type="GenomeRNAi" id="34095"/>
<dbReference type="PRO" id="PR:Q9VLU0"/>
<dbReference type="Proteomes" id="UP000000803">
    <property type="component" value="Chromosome 2L"/>
</dbReference>
<dbReference type="Bgee" id="FBgn0031977">
    <property type="expression patterns" value="Expressed in eye disc (Drosophila) and 192 other cell types or tissues"/>
</dbReference>
<dbReference type="ExpressionAtlas" id="Q9VLU0">
    <property type="expression patterns" value="baseline and differential"/>
</dbReference>
<dbReference type="GO" id="GO:0000793">
    <property type="term" value="C:condensed chromosome"/>
    <property type="evidence" value="ECO:0000318"/>
    <property type="project" value="GO_Central"/>
</dbReference>
<dbReference type="GO" id="GO:0005737">
    <property type="term" value="C:cytoplasm"/>
    <property type="evidence" value="ECO:0000314"/>
    <property type="project" value="FlyBase"/>
</dbReference>
<dbReference type="GO" id="GO:0005635">
    <property type="term" value="C:nuclear envelope"/>
    <property type="evidence" value="ECO:0000314"/>
    <property type="project" value="FlyBase"/>
</dbReference>
<dbReference type="GO" id="GO:0005654">
    <property type="term" value="C:nucleoplasm"/>
    <property type="evidence" value="ECO:0000314"/>
    <property type="project" value="FlyBase"/>
</dbReference>
<dbReference type="GO" id="GO:0005634">
    <property type="term" value="C:nucleus"/>
    <property type="evidence" value="ECO:0000318"/>
    <property type="project" value="GO_Central"/>
</dbReference>
<dbReference type="GO" id="GO:0003677">
    <property type="term" value="F:DNA binding"/>
    <property type="evidence" value="ECO:0000318"/>
    <property type="project" value="GO_Central"/>
</dbReference>
<dbReference type="GO" id="GO:0030261">
    <property type="term" value="P:chromosome condensation"/>
    <property type="evidence" value="ECO:0000315"/>
    <property type="project" value="FlyBase"/>
</dbReference>
<dbReference type="GO" id="GO:0051276">
    <property type="term" value="P:chromosome organization"/>
    <property type="evidence" value="ECO:0000318"/>
    <property type="project" value="GO_Central"/>
</dbReference>
<dbReference type="GO" id="GO:0030717">
    <property type="term" value="P:oocyte karyosome formation"/>
    <property type="evidence" value="ECO:0000315"/>
    <property type="project" value="FlyBase"/>
</dbReference>
<dbReference type="FunFam" id="1.10.150.40:FF:000004">
    <property type="entry name" value="Barrier-to-autointegration factor"/>
    <property type="match status" value="1"/>
</dbReference>
<dbReference type="Gene3D" id="1.10.150.40">
    <property type="entry name" value="Barrier-to-autointegration factor, BAF"/>
    <property type="match status" value="1"/>
</dbReference>
<dbReference type="InterPro" id="IPR051387">
    <property type="entry name" value="BAF"/>
</dbReference>
<dbReference type="InterPro" id="IPR004122">
    <property type="entry name" value="BAF_prot"/>
</dbReference>
<dbReference type="InterPro" id="IPR036617">
    <property type="entry name" value="BAF_sf"/>
</dbReference>
<dbReference type="PANTHER" id="PTHR47507">
    <property type="entry name" value="BARRIER TO AUTOINTEGRATION FACTOR 2"/>
    <property type="match status" value="1"/>
</dbReference>
<dbReference type="PANTHER" id="PTHR47507:SF6">
    <property type="entry name" value="BARRIER-TO-AUTOINTEGRATION FACTOR"/>
    <property type="match status" value="1"/>
</dbReference>
<dbReference type="Pfam" id="PF02961">
    <property type="entry name" value="SAM_BAF"/>
    <property type="match status" value="1"/>
</dbReference>
<dbReference type="SMART" id="SM01023">
    <property type="entry name" value="BAF"/>
    <property type="match status" value="1"/>
</dbReference>
<dbReference type="SUPFAM" id="SSF47798">
    <property type="entry name" value="Barrier-to-autointegration factor, BAF"/>
    <property type="match status" value="1"/>
</dbReference>
<protein>
    <recommendedName>
        <fullName>Barrier-to-autointegration factor</fullName>
    </recommendedName>
</protein>
<proteinExistence type="evidence at protein level"/>
<sequence length="90" mass="10116">MSGTSQKHRNFVAEPMGNKSVTELAGIGETLGGRLKDAGFDMAYTVLGQYLVLKKDEELFKDWMKEVCHASSKQASDCYNCLNDWCEEFL</sequence>
<organism>
    <name type="scientific">Drosophila melanogaster</name>
    <name type="common">Fruit fly</name>
    <dbReference type="NCBI Taxonomy" id="7227"/>
    <lineage>
        <taxon>Eukaryota</taxon>
        <taxon>Metazoa</taxon>
        <taxon>Ecdysozoa</taxon>
        <taxon>Arthropoda</taxon>
        <taxon>Hexapoda</taxon>
        <taxon>Insecta</taxon>
        <taxon>Pterygota</taxon>
        <taxon>Neoptera</taxon>
        <taxon>Endopterygota</taxon>
        <taxon>Diptera</taxon>
        <taxon>Brachycera</taxon>
        <taxon>Muscomorpha</taxon>
        <taxon>Ephydroidea</taxon>
        <taxon>Drosophilidae</taxon>
        <taxon>Drosophila</taxon>
        <taxon>Sophophora</taxon>
    </lineage>
</organism>
<accession>Q9VLU0</accession>
<accession>Q53XE9</accession>
<reference key="1">
    <citation type="journal article" date="2000" name="Science">
        <title>The genome sequence of Drosophila melanogaster.</title>
        <authorList>
            <person name="Adams M.D."/>
            <person name="Celniker S.E."/>
            <person name="Holt R.A."/>
            <person name="Evans C.A."/>
            <person name="Gocayne J.D."/>
            <person name="Amanatides P.G."/>
            <person name="Scherer S.E."/>
            <person name="Li P.W."/>
            <person name="Hoskins R.A."/>
            <person name="Galle R.F."/>
            <person name="George R.A."/>
            <person name="Lewis S.E."/>
            <person name="Richards S."/>
            <person name="Ashburner M."/>
            <person name="Henderson S.N."/>
            <person name="Sutton G.G."/>
            <person name="Wortman J.R."/>
            <person name="Yandell M.D."/>
            <person name="Zhang Q."/>
            <person name="Chen L.X."/>
            <person name="Brandon R.C."/>
            <person name="Rogers Y.-H.C."/>
            <person name="Blazej R.G."/>
            <person name="Champe M."/>
            <person name="Pfeiffer B.D."/>
            <person name="Wan K.H."/>
            <person name="Doyle C."/>
            <person name="Baxter E.G."/>
            <person name="Helt G."/>
            <person name="Nelson C.R."/>
            <person name="Miklos G.L.G."/>
            <person name="Abril J.F."/>
            <person name="Agbayani A."/>
            <person name="An H.-J."/>
            <person name="Andrews-Pfannkoch C."/>
            <person name="Baldwin D."/>
            <person name="Ballew R.M."/>
            <person name="Basu A."/>
            <person name="Baxendale J."/>
            <person name="Bayraktaroglu L."/>
            <person name="Beasley E.M."/>
            <person name="Beeson K.Y."/>
            <person name="Benos P.V."/>
            <person name="Berman B.P."/>
            <person name="Bhandari D."/>
            <person name="Bolshakov S."/>
            <person name="Borkova D."/>
            <person name="Botchan M.R."/>
            <person name="Bouck J."/>
            <person name="Brokstein P."/>
            <person name="Brottier P."/>
            <person name="Burtis K.C."/>
            <person name="Busam D.A."/>
            <person name="Butler H."/>
            <person name="Cadieu E."/>
            <person name="Center A."/>
            <person name="Chandra I."/>
            <person name="Cherry J.M."/>
            <person name="Cawley S."/>
            <person name="Dahlke C."/>
            <person name="Davenport L.B."/>
            <person name="Davies P."/>
            <person name="de Pablos B."/>
            <person name="Delcher A."/>
            <person name="Deng Z."/>
            <person name="Mays A.D."/>
            <person name="Dew I."/>
            <person name="Dietz S.M."/>
            <person name="Dodson K."/>
            <person name="Doup L.E."/>
            <person name="Downes M."/>
            <person name="Dugan-Rocha S."/>
            <person name="Dunkov B.C."/>
            <person name="Dunn P."/>
            <person name="Durbin K.J."/>
            <person name="Evangelista C.C."/>
            <person name="Ferraz C."/>
            <person name="Ferriera S."/>
            <person name="Fleischmann W."/>
            <person name="Fosler C."/>
            <person name="Gabrielian A.E."/>
            <person name="Garg N.S."/>
            <person name="Gelbart W.M."/>
            <person name="Glasser K."/>
            <person name="Glodek A."/>
            <person name="Gong F."/>
            <person name="Gorrell J.H."/>
            <person name="Gu Z."/>
            <person name="Guan P."/>
            <person name="Harris M."/>
            <person name="Harris N.L."/>
            <person name="Harvey D.A."/>
            <person name="Heiman T.J."/>
            <person name="Hernandez J.R."/>
            <person name="Houck J."/>
            <person name="Hostin D."/>
            <person name="Houston K.A."/>
            <person name="Howland T.J."/>
            <person name="Wei M.-H."/>
            <person name="Ibegwam C."/>
            <person name="Jalali M."/>
            <person name="Kalush F."/>
            <person name="Karpen G.H."/>
            <person name="Ke Z."/>
            <person name="Kennison J.A."/>
            <person name="Ketchum K.A."/>
            <person name="Kimmel B.E."/>
            <person name="Kodira C.D."/>
            <person name="Kraft C.L."/>
            <person name="Kravitz S."/>
            <person name="Kulp D."/>
            <person name="Lai Z."/>
            <person name="Lasko P."/>
            <person name="Lei Y."/>
            <person name="Levitsky A.A."/>
            <person name="Li J.H."/>
            <person name="Li Z."/>
            <person name="Liang Y."/>
            <person name="Lin X."/>
            <person name="Liu X."/>
            <person name="Mattei B."/>
            <person name="McIntosh T.C."/>
            <person name="McLeod M.P."/>
            <person name="McPherson D."/>
            <person name="Merkulov G."/>
            <person name="Milshina N.V."/>
            <person name="Mobarry C."/>
            <person name="Morris J."/>
            <person name="Moshrefi A."/>
            <person name="Mount S.M."/>
            <person name="Moy M."/>
            <person name="Murphy B."/>
            <person name="Murphy L."/>
            <person name="Muzny D.M."/>
            <person name="Nelson D.L."/>
            <person name="Nelson D.R."/>
            <person name="Nelson K.A."/>
            <person name="Nixon K."/>
            <person name="Nusskern D.R."/>
            <person name="Pacleb J.M."/>
            <person name="Palazzolo M."/>
            <person name="Pittman G.S."/>
            <person name="Pan S."/>
            <person name="Pollard J."/>
            <person name="Puri V."/>
            <person name="Reese M.G."/>
            <person name="Reinert K."/>
            <person name="Remington K."/>
            <person name="Saunders R.D.C."/>
            <person name="Scheeler F."/>
            <person name="Shen H."/>
            <person name="Shue B.C."/>
            <person name="Siden-Kiamos I."/>
            <person name="Simpson M."/>
            <person name="Skupski M.P."/>
            <person name="Smith T.J."/>
            <person name="Spier E."/>
            <person name="Spradling A.C."/>
            <person name="Stapleton M."/>
            <person name="Strong R."/>
            <person name="Sun E."/>
            <person name="Svirskas R."/>
            <person name="Tector C."/>
            <person name="Turner R."/>
            <person name="Venter E."/>
            <person name="Wang A.H."/>
            <person name="Wang X."/>
            <person name="Wang Z.-Y."/>
            <person name="Wassarman D.A."/>
            <person name="Weinstock G.M."/>
            <person name="Weissenbach J."/>
            <person name="Williams S.M."/>
            <person name="Woodage T."/>
            <person name="Worley K.C."/>
            <person name="Wu D."/>
            <person name="Yang S."/>
            <person name="Yao Q.A."/>
            <person name="Ye J."/>
            <person name="Yeh R.-F."/>
            <person name="Zaveri J.S."/>
            <person name="Zhan M."/>
            <person name="Zhang G."/>
            <person name="Zhao Q."/>
            <person name="Zheng L."/>
            <person name="Zheng X.H."/>
            <person name="Zhong F.N."/>
            <person name="Zhong W."/>
            <person name="Zhou X."/>
            <person name="Zhu S.C."/>
            <person name="Zhu X."/>
            <person name="Smith H.O."/>
            <person name="Gibbs R.A."/>
            <person name="Myers E.W."/>
            <person name="Rubin G.M."/>
            <person name="Venter J.C."/>
        </authorList>
    </citation>
    <scope>NUCLEOTIDE SEQUENCE [LARGE SCALE GENOMIC DNA]</scope>
    <source>
        <strain>Berkeley</strain>
    </source>
</reference>
<reference key="2">
    <citation type="journal article" date="2002" name="Genome Biol.">
        <title>Annotation of the Drosophila melanogaster euchromatic genome: a systematic review.</title>
        <authorList>
            <person name="Misra S."/>
            <person name="Crosby M.A."/>
            <person name="Mungall C.J."/>
            <person name="Matthews B.B."/>
            <person name="Campbell K.S."/>
            <person name="Hradecky P."/>
            <person name="Huang Y."/>
            <person name="Kaminker J.S."/>
            <person name="Millburn G.H."/>
            <person name="Prochnik S.E."/>
            <person name="Smith C.D."/>
            <person name="Tupy J.L."/>
            <person name="Whitfield E.J."/>
            <person name="Bayraktaroglu L."/>
            <person name="Berman B.P."/>
            <person name="Bettencourt B.R."/>
            <person name="Celniker S.E."/>
            <person name="de Grey A.D.N.J."/>
            <person name="Drysdale R.A."/>
            <person name="Harris N.L."/>
            <person name="Richter J."/>
            <person name="Russo S."/>
            <person name="Schroeder A.J."/>
            <person name="Shu S.Q."/>
            <person name="Stapleton M."/>
            <person name="Yamada C."/>
            <person name="Ashburner M."/>
            <person name="Gelbart W.M."/>
            <person name="Rubin G.M."/>
            <person name="Lewis S.E."/>
        </authorList>
    </citation>
    <scope>GENOME REANNOTATION</scope>
    <source>
        <strain>Berkeley</strain>
    </source>
</reference>
<reference key="3">
    <citation type="submission" date="2004-02" db="EMBL/GenBank/DDBJ databases">
        <authorList>
            <person name="Stapleton M."/>
            <person name="Carlson J.W."/>
            <person name="Chavez C."/>
            <person name="Frise E."/>
            <person name="George R.A."/>
            <person name="Pacleb J.M."/>
            <person name="Park S."/>
            <person name="Wan K.H."/>
            <person name="Yu C."/>
            <person name="Rubin G.M."/>
            <person name="Celniker S.E."/>
        </authorList>
    </citation>
    <scope>NUCLEOTIDE SEQUENCE [LARGE SCALE MRNA]</scope>
    <source>
        <strain>Berkeley</strain>
        <tissue>Head</tissue>
    </source>
</reference>
<reference key="4">
    <citation type="journal article" date="2003" name="J. Cell Sci.">
        <title>Barrier-to-autointegration factor plays crucial roles in cell cycle progression and nuclear organization in Drosophila.</title>
        <authorList>
            <person name="Furukawa K."/>
            <person name="Sugiyama S."/>
            <person name="Osouda S."/>
            <person name="Goto H."/>
            <person name="Inagaki M."/>
            <person name="Horigome T."/>
            <person name="Omata S."/>
            <person name="McConnell M."/>
            <person name="Fisher P.A."/>
            <person name="Nishida Y."/>
        </authorList>
    </citation>
    <scope>FUNCTION</scope>
    <scope>SUBCELLULAR LOCATION</scope>
    <scope>DISRUPTION PHENOTYPE</scope>
</reference>
<reference key="5">
    <citation type="journal article" date="2010" name="Dev. Biol.">
        <title>The Drosophila LEM-domain protein MAN1 antagonizes BMP signaling at the neuromuscular junction and the wing crossveins.</title>
        <authorList>
            <person name="Wagner N."/>
            <person name="Weyhersmueller A."/>
            <person name="Blauth A."/>
            <person name="Schuhmann T."/>
            <person name="Heckmann M."/>
            <person name="Krohne G."/>
            <person name="Samakovlis C."/>
        </authorList>
    </citation>
    <scope>INTERACTION WITH MAD1</scope>
</reference>
<keyword id="KW-0158">Chromosome</keyword>
<keyword id="KW-0963">Cytoplasm</keyword>
<keyword id="KW-0238">DNA-binding</keyword>
<keyword id="KW-0539">Nucleus</keyword>
<keyword id="KW-1185">Reference proteome</keyword>
<comment type="function">
    <text evidence="1">Plays fundamental roles in nuclear assembly, chromatin organization, gene expression and gonad development. May potently compress chromatin structure and be involved in membrane recruitment and chromatin decondensation during nuclear assembly. Functions are required in both M phase and interphase of the cell cycle.</text>
</comment>
<comment type="subunit">
    <text evidence="2">May interact with MAD1.</text>
</comment>
<comment type="subcellular location">
    <subcellularLocation>
        <location evidence="1">Nucleus</location>
    </subcellularLocation>
    <subcellularLocation>
        <location evidence="1">Cytoplasm</location>
    </subcellularLocation>
    <subcellularLocation>
        <location evidence="1">Chromosome</location>
    </subcellularLocation>
    <text>Colocalizes with chromosomes during both interphase and mitosis.</text>
</comment>
<comment type="disruption phenotype">
    <text evidence="1">Death at the larval-pupal transition with small brains and missing imaginal disks. Specific abnormalities in interphase nuclear structure; clumping of chromatin and convolution of nuclear shape.</text>
</comment>
<comment type="similarity">
    <text evidence="3">Belongs to the BAF family.</text>
</comment>
<evidence type="ECO:0000269" key="1">
    <source>
    </source>
</evidence>
<evidence type="ECO:0000269" key="2">
    <source>
    </source>
</evidence>
<evidence type="ECO:0000305" key="3"/>
<feature type="chain" id="PRO_0000221032" description="Barrier-to-autointegration factor">
    <location>
        <begin position="1"/>
        <end position="90"/>
    </location>
</feature>